<name>RS17_BORBU</name>
<reference key="1">
    <citation type="journal article" date="1997" name="Nature">
        <title>Genomic sequence of a Lyme disease spirochaete, Borrelia burgdorferi.</title>
        <authorList>
            <person name="Fraser C.M."/>
            <person name="Casjens S."/>
            <person name="Huang W.M."/>
            <person name="Sutton G.G."/>
            <person name="Clayton R.A."/>
            <person name="Lathigra R."/>
            <person name="White O."/>
            <person name="Ketchum K.A."/>
            <person name="Dodson R.J."/>
            <person name="Hickey E.K."/>
            <person name="Gwinn M.L."/>
            <person name="Dougherty B.A."/>
            <person name="Tomb J.-F."/>
            <person name="Fleischmann R.D."/>
            <person name="Richardson D.L."/>
            <person name="Peterson J.D."/>
            <person name="Kerlavage A.R."/>
            <person name="Quackenbush J."/>
            <person name="Salzberg S.L."/>
            <person name="Hanson M."/>
            <person name="van Vugt R."/>
            <person name="Palmer N."/>
            <person name="Adams M.D."/>
            <person name="Gocayne J.D."/>
            <person name="Weidman J.F."/>
            <person name="Utterback T.R."/>
            <person name="Watthey L."/>
            <person name="McDonald L.A."/>
            <person name="Artiach P."/>
            <person name="Bowman C."/>
            <person name="Garland S.A."/>
            <person name="Fujii C."/>
            <person name="Cotton M.D."/>
            <person name="Horst K."/>
            <person name="Roberts K.M."/>
            <person name="Hatch B."/>
            <person name="Smith H.O."/>
            <person name="Venter J.C."/>
        </authorList>
    </citation>
    <scope>NUCLEOTIDE SEQUENCE [LARGE SCALE GENOMIC DNA]</scope>
    <source>
        <strain>ATCC 35210 / DSM 4680 / CIP 102532 / B31</strain>
    </source>
</reference>
<keyword id="KW-0002">3D-structure</keyword>
<keyword id="KW-1185">Reference proteome</keyword>
<keyword id="KW-0687">Ribonucleoprotein</keyword>
<keyword id="KW-0689">Ribosomal protein</keyword>
<keyword id="KW-0694">RNA-binding</keyword>
<keyword id="KW-0699">rRNA-binding</keyword>
<dbReference type="EMBL" id="AE000783">
    <property type="protein sequence ID" value="AAC66855.1"/>
    <property type="molecule type" value="Genomic_DNA"/>
</dbReference>
<dbReference type="PIR" id="F70160">
    <property type="entry name" value="F70160"/>
</dbReference>
<dbReference type="RefSeq" id="NP_212621.1">
    <property type="nucleotide sequence ID" value="NC_001318.1"/>
</dbReference>
<dbReference type="RefSeq" id="WP_002557078.1">
    <property type="nucleotide sequence ID" value="NC_001318.1"/>
</dbReference>
<dbReference type="PDB" id="8FMW">
    <property type="method" value="EM"/>
    <property type="resolution" value="2.86 A"/>
    <property type="chains" value="Q=3-84"/>
</dbReference>
<dbReference type="PDBsum" id="8FMW"/>
<dbReference type="EMDB" id="EMD-29298"/>
<dbReference type="SMR" id="O51440"/>
<dbReference type="STRING" id="224326.BB_0487"/>
<dbReference type="PaxDb" id="224326-BB_0487"/>
<dbReference type="EnsemblBacteria" id="AAC66855">
    <property type="protein sequence ID" value="AAC66855"/>
    <property type="gene ID" value="BB_0487"/>
</dbReference>
<dbReference type="GeneID" id="56567922"/>
<dbReference type="KEGG" id="bbu:BB_0487"/>
<dbReference type="PATRIC" id="fig|224326.49.peg.878"/>
<dbReference type="HOGENOM" id="CLU_073626_1_0_12"/>
<dbReference type="OrthoDB" id="9811714at2"/>
<dbReference type="Proteomes" id="UP000001807">
    <property type="component" value="Chromosome"/>
</dbReference>
<dbReference type="GO" id="GO:0022627">
    <property type="term" value="C:cytosolic small ribosomal subunit"/>
    <property type="evidence" value="ECO:0007669"/>
    <property type="project" value="TreeGrafter"/>
</dbReference>
<dbReference type="GO" id="GO:0019843">
    <property type="term" value="F:rRNA binding"/>
    <property type="evidence" value="ECO:0007669"/>
    <property type="project" value="UniProtKB-UniRule"/>
</dbReference>
<dbReference type="GO" id="GO:0003735">
    <property type="term" value="F:structural constituent of ribosome"/>
    <property type="evidence" value="ECO:0007669"/>
    <property type="project" value="InterPro"/>
</dbReference>
<dbReference type="GO" id="GO:0006412">
    <property type="term" value="P:translation"/>
    <property type="evidence" value="ECO:0007669"/>
    <property type="project" value="UniProtKB-UniRule"/>
</dbReference>
<dbReference type="CDD" id="cd00364">
    <property type="entry name" value="Ribosomal_uS17"/>
    <property type="match status" value="1"/>
</dbReference>
<dbReference type="Gene3D" id="2.40.50.140">
    <property type="entry name" value="Nucleic acid-binding proteins"/>
    <property type="match status" value="1"/>
</dbReference>
<dbReference type="HAMAP" id="MF_01345_B">
    <property type="entry name" value="Ribosomal_uS17_B"/>
    <property type="match status" value="1"/>
</dbReference>
<dbReference type="InterPro" id="IPR012340">
    <property type="entry name" value="NA-bd_OB-fold"/>
</dbReference>
<dbReference type="InterPro" id="IPR000266">
    <property type="entry name" value="Ribosomal_uS17"/>
</dbReference>
<dbReference type="InterPro" id="IPR019984">
    <property type="entry name" value="Ribosomal_uS17_bact/chlr"/>
</dbReference>
<dbReference type="InterPro" id="IPR019979">
    <property type="entry name" value="Ribosomal_uS17_CS"/>
</dbReference>
<dbReference type="NCBIfam" id="NF004123">
    <property type="entry name" value="PRK05610.1"/>
    <property type="match status" value="1"/>
</dbReference>
<dbReference type="NCBIfam" id="TIGR03635">
    <property type="entry name" value="uS17_bact"/>
    <property type="match status" value="1"/>
</dbReference>
<dbReference type="PANTHER" id="PTHR10744">
    <property type="entry name" value="40S RIBOSOMAL PROTEIN S11 FAMILY MEMBER"/>
    <property type="match status" value="1"/>
</dbReference>
<dbReference type="PANTHER" id="PTHR10744:SF1">
    <property type="entry name" value="SMALL RIBOSOMAL SUBUNIT PROTEIN US17M"/>
    <property type="match status" value="1"/>
</dbReference>
<dbReference type="Pfam" id="PF00366">
    <property type="entry name" value="Ribosomal_S17"/>
    <property type="match status" value="1"/>
</dbReference>
<dbReference type="PRINTS" id="PR00973">
    <property type="entry name" value="RIBOSOMALS17"/>
</dbReference>
<dbReference type="SUPFAM" id="SSF50249">
    <property type="entry name" value="Nucleic acid-binding proteins"/>
    <property type="match status" value="1"/>
</dbReference>
<dbReference type="PROSITE" id="PS00056">
    <property type="entry name" value="RIBOSOMAL_S17"/>
    <property type="match status" value="1"/>
</dbReference>
<sequence length="84" mass="9852">MARENKKELIGKVVSDKMSKTIVVEIVQRKMHPIYHKYLKVSKKVKAHDEKEVSKVGDKVKIIEVRPISKDKRWSLVEVLEKLK</sequence>
<protein>
    <recommendedName>
        <fullName evidence="1">Small ribosomal subunit protein uS17</fullName>
    </recommendedName>
    <alternativeName>
        <fullName evidence="2">30S ribosomal protein S17</fullName>
    </alternativeName>
</protein>
<accession>O51440</accession>
<proteinExistence type="evidence at protein level"/>
<organism>
    <name type="scientific">Borreliella burgdorferi (strain ATCC 35210 / DSM 4680 / CIP 102532 / B31)</name>
    <name type="common">Borrelia burgdorferi</name>
    <dbReference type="NCBI Taxonomy" id="224326"/>
    <lineage>
        <taxon>Bacteria</taxon>
        <taxon>Pseudomonadati</taxon>
        <taxon>Spirochaetota</taxon>
        <taxon>Spirochaetia</taxon>
        <taxon>Spirochaetales</taxon>
        <taxon>Borreliaceae</taxon>
        <taxon>Borreliella</taxon>
    </lineage>
</organism>
<feature type="chain" id="PRO_0000128448" description="Small ribosomal subunit protein uS17">
    <location>
        <begin position="1"/>
        <end position="84"/>
    </location>
</feature>
<gene>
    <name evidence="1" type="primary">rpsQ</name>
    <name type="ordered locus">BB_0487</name>
</gene>
<comment type="function">
    <text evidence="1">One of the primary rRNA binding proteins, it binds specifically to the 5'-end of 16S ribosomal RNA.</text>
</comment>
<comment type="subunit">
    <text evidence="1">Part of the 30S ribosomal subunit.</text>
</comment>
<comment type="similarity">
    <text evidence="1">Belongs to the universal ribosomal protein uS17 family.</text>
</comment>
<evidence type="ECO:0000255" key="1">
    <source>
        <dbReference type="HAMAP-Rule" id="MF_01345"/>
    </source>
</evidence>
<evidence type="ECO:0000305" key="2"/>